<accession>Q8SRH2</accession>
<organism>
    <name type="scientific">Encephalitozoon cuniculi (strain GB-M1)</name>
    <name type="common">Microsporidian parasite</name>
    <dbReference type="NCBI Taxonomy" id="284813"/>
    <lineage>
        <taxon>Eukaryota</taxon>
        <taxon>Fungi</taxon>
        <taxon>Fungi incertae sedis</taxon>
        <taxon>Microsporidia</taxon>
        <taxon>Unikaryonidae</taxon>
        <taxon>Encephalitozoon</taxon>
    </lineage>
</organism>
<name>SYTC_ENCCU</name>
<feature type="chain" id="PRO_0000388384" description="Probable threonine--tRNA ligase, cytoplasmic">
    <location>
        <begin position="1"/>
        <end position="640"/>
    </location>
</feature>
<feature type="domain" description="TGS" evidence="2">
    <location>
        <begin position="1"/>
        <end position="63"/>
    </location>
</feature>
<evidence type="ECO:0000250" key="1"/>
<evidence type="ECO:0000255" key="2">
    <source>
        <dbReference type="PROSITE-ProRule" id="PRU01228"/>
    </source>
</evidence>
<evidence type="ECO:0000305" key="3"/>
<keyword id="KW-0030">Aminoacyl-tRNA synthetase</keyword>
<keyword id="KW-0067">ATP-binding</keyword>
<keyword id="KW-0963">Cytoplasm</keyword>
<keyword id="KW-0436">Ligase</keyword>
<keyword id="KW-0547">Nucleotide-binding</keyword>
<keyword id="KW-0648">Protein biosynthesis</keyword>
<keyword id="KW-1185">Reference proteome</keyword>
<protein>
    <recommendedName>
        <fullName>Probable threonine--tRNA ligase, cytoplasmic</fullName>
        <ecNumber>6.1.1.3</ecNumber>
    </recommendedName>
    <alternativeName>
        <fullName>Threonyl-tRNA synthetase</fullName>
        <shortName>ThrRS</shortName>
    </alternativeName>
</protein>
<gene>
    <name type="ordered locus">ECU07_1570</name>
</gene>
<proteinExistence type="inferred from homology"/>
<reference key="1">
    <citation type="journal article" date="2001" name="Nature">
        <title>Genome sequence and gene compaction of the eukaryote parasite Encephalitozoon cuniculi.</title>
        <authorList>
            <person name="Katinka M.D."/>
            <person name="Duprat S."/>
            <person name="Cornillot E."/>
            <person name="Metenier G."/>
            <person name="Thomarat F."/>
            <person name="Prensier G."/>
            <person name="Barbe V."/>
            <person name="Peyretaillade E."/>
            <person name="Brottier P."/>
            <person name="Wincker P."/>
            <person name="Delbac F."/>
            <person name="El Alaoui H."/>
            <person name="Peyret P."/>
            <person name="Saurin W."/>
            <person name="Gouy M."/>
            <person name="Weissenbach J."/>
            <person name="Vivares C.P."/>
        </authorList>
    </citation>
    <scope>NUCLEOTIDE SEQUENCE [LARGE SCALE GENOMIC DNA]</scope>
    <source>
        <strain>GB-M1</strain>
    </source>
</reference>
<dbReference type="EC" id="6.1.1.3"/>
<dbReference type="EMBL" id="AL590447">
    <property type="protein sequence ID" value="CAD25688.1"/>
    <property type="molecule type" value="Genomic_DNA"/>
</dbReference>
<dbReference type="RefSeq" id="NP_586084.1">
    <property type="nucleotide sequence ID" value="NM_001041706.1"/>
</dbReference>
<dbReference type="SMR" id="Q8SRH2"/>
<dbReference type="FunCoup" id="Q8SRH2">
    <property type="interactions" value="141"/>
</dbReference>
<dbReference type="STRING" id="284813.Q8SRH2"/>
<dbReference type="GeneID" id="859518"/>
<dbReference type="KEGG" id="ecu:ECU07_1570"/>
<dbReference type="VEuPathDB" id="MicrosporidiaDB:ECU07_1570"/>
<dbReference type="HOGENOM" id="CLU_008554_0_1_1"/>
<dbReference type="InParanoid" id="Q8SRH2"/>
<dbReference type="OMA" id="WYADGMY"/>
<dbReference type="OrthoDB" id="5423599at2759"/>
<dbReference type="Proteomes" id="UP000000819">
    <property type="component" value="Chromosome VII"/>
</dbReference>
<dbReference type="GO" id="GO:0005739">
    <property type="term" value="C:mitochondrion"/>
    <property type="evidence" value="ECO:0007669"/>
    <property type="project" value="TreeGrafter"/>
</dbReference>
<dbReference type="GO" id="GO:0005524">
    <property type="term" value="F:ATP binding"/>
    <property type="evidence" value="ECO:0007669"/>
    <property type="project" value="UniProtKB-KW"/>
</dbReference>
<dbReference type="GO" id="GO:0004829">
    <property type="term" value="F:threonine-tRNA ligase activity"/>
    <property type="evidence" value="ECO:0007669"/>
    <property type="project" value="UniProtKB-EC"/>
</dbReference>
<dbReference type="GO" id="GO:0006435">
    <property type="term" value="P:threonyl-tRNA aminoacylation"/>
    <property type="evidence" value="ECO:0007669"/>
    <property type="project" value="InterPro"/>
</dbReference>
<dbReference type="CDD" id="cd01667">
    <property type="entry name" value="TGS_ThrRS"/>
    <property type="match status" value="1"/>
</dbReference>
<dbReference type="CDD" id="cd00771">
    <property type="entry name" value="ThrRS_core"/>
    <property type="match status" value="1"/>
</dbReference>
<dbReference type="FunFam" id="3.30.930.10:FF:000019">
    <property type="entry name" value="Threonine--tRNA ligase"/>
    <property type="match status" value="1"/>
</dbReference>
<dbReference type="FunFam" id="3.30.980.10:FF:000005">
    <property type="entry name" value="Threonyl-tRNA synthetase, mitochondrial"/>
    <property type="match status" value="1"/>
</dbReference>
<dbReference type="Gene3D" id="3.10.20.30">
    <property type="match status" value="1"/>
</dbReference>
<dbReference type="Gene3D" id="3.40.50.800">
    <property type="entry name" value="Anticodon-binding domain"/>
    <property type="match status" value="1"/>
</dbReference>
<dbReference type="Gene3D" id="3.30.930.10">
    <property type="entry name" value="Bira Bifunctional Protein, Domain 2"/>
    <property type="match status" value="1"/>
</dbReference>
<dbReference type="Gene3D" id="3.30.980.10">
    <property type="entry name" value="Threonyl-trna Synthetase, Chain A, domain 2"/>
    <property type="match status" value="1"/>
</dbReference>
<dbReference type="HAMAP" id="MF_00184">
    <property type="entry name" value="Thr_tRNA_synth"/>
    <property type="match status" value="1"/>
</dbReference>
<dbReference type="InterPro" id="IPR002314">
    <property type="entry name" value="aa-tRNA-synt_IIb"/>
</dbReference>
<dbReference type="InterPro" id="IPR006195">
    <property type="entry name" value="aa-tRNA-synth_II"/>
</dbReference>
<dbReference type="InterPro" id="IPR045864">
    <property type="entry name" value="aa-tRNA-synth_II/BPL/LPL"/>
</dbReference>
<dbReference type="InterPro" id="IPR004154">
    <property type="entry name" value="Anticodon-bd"/>
</dbReference>
<dbReference type="InterPro" id="IPR036621">
    <property type="entry name" value="Anticodon-bd_dom_sf"/>
</dbReference>
<dbReference type="InterPro" id="IPR012675">
    <property type="entry name" value="Beta-grasp_dom_sf"/>
</dbReference>
<dbReference type="InterPro" id="IPR004095">
    <property type="entry name" value="TGS"/>
</dbReference>
<dbReference type="InterPro" id="IPR002320">
    <property type="entry name" value="Thr-tRNA-ligase_IIa"/>
</dbReference>
<dbReference type="InterPro" id="IPR018163">
    <property type="entry name" value="Thr/Ala-tRNA-synth_IIc_edit"/>
</dbReference>
<dbReference type="InterPro" id="IPR033728">
    <property type="entry name" value="ThrRS_core"/>
</dbReference>
<dbReference type="InterPro" id="IPR012947">
    <property type="entry name" value="tRNA_SAD"/>
</dbReference>
<dbReference type="NCBIfam" id="TIGR00418">
    <property type="entry name" value="thrS"/>
    <property type="match status" value="1"/>
</dbReference>
<dbReference type="PANTHER" id="PTHR11451:SF44">
    <property type="entry name" value="THREONINE--TRNA LIGASE, CHLOROPLASTIC_MITOCHONDRIAL 2"/>
    <property type="match status" value="1"/>
</dbReference>
<dbReference type="PANTHER" id="PTHR11451">
    <property type="entry name" value="THREONINE-TRNA LIGASE"/>
    <property type="match status" value="1"/>
</dbReference>
<dbReference type="Pfam" id="PF03129">
    <property type="entry name" value="HGTP_anticodon"/>
    <property type="match status" value="1"/>
</dbReference>
<dbReference type="Pfam" id="PF00587">
    <property type="entry name" value="tRNA-synt_2b"/>
    <property type="match status" value="1"/>
</dbReference>
<dbReference type="Pfam" id="PF07973">
    <property type="entry name" value="tRNA_SAD"/>
    <property type="match status" value="1"/>
</dbReference>
<dbReference type="PRINTS" id="PR01047">
    <property type="entry name" value="TRNASYNTHTHR"/>
</dbReference>
<dbReference type="SMART" id="SM00863">
    <property type="entry name" value="tRNA_SAD"/>
    <property type="match status" value="1"/>
</dbReference>
<dbReference type="SUPFAM" id="SSF52954">
    <property type="entry name" value="Class II aaRS ABD-related"/>
    <property type="match status" value="1"/>
</dbReference>
<dbReference type="SUPFAM" id="SSF55681">
    <property type="entry name" value="Class II aaRS and biotin synthetases"/>
    <property type="match status" value="1"/>
</dbReference>
<dbReference type="SUPFAM" id="SSF55186">
    <property type="entry name" value="ThrRS/AlaRS common domain"/>
    <property type="match status" value="1"/>
</dbReference>
<dbReference type="PROSITE" id="PS50862">
    <property type="entry name" value="AA_TRNA_LIGASE_II"/>
    <property type="match status" value="1"/>
</dbReference>
<dbReference type="PROSITE" id="PS51880">
    <property type="entry name" value="TGS"/>
    <property type="match status" value="1"/>
</dbReference>
<comment type="catalytic activity">
    <reaction>
        <text>tRNA(Thr) + L-threonine + ATP = L-threonyl-tRNA(Thr) + AMP + diphosphate + H(+)</text>
        <dbReference type="Rhea" id="RHEA:24624"/>
        <dbReference type="Rhea" id="RHEA-COMP:9670"/>
        <dbReference type="Rhea" id="RHEA-COMP:9704"/>
        <dbReference type="ChEBI" id="CHEBI:15378"/>
        <dbReference type="ChEBI" id="CHEBI:30616"/>
        <dbReference type="ChEBI" id="CHEBI:33019"/>
        <dbReference type="ChEBI" id="CHEBI:57926"/>
        <dbReference type="ChEBI" id="CHEBI:78442"/>
        <dbReference type="ChEBI" id="CHEBI:78534"/>
        <dbReference type="ChEBI" id="CHEBI:456215"/>
        <dbReference type="EC" id="6.1.1.3"/>
    </reaction>
</comment>
<comment type="subcellular location">
    <subcellularLocation>
        <location evidence="1">Cytoplasm</location>
    </subcellularLocation>
</comment>
<comment type="similarity">
    <text evidence="3">Belongs to the class-II aminoacyl-tRNA synthetase family.</text>
</comment>
<sequence length="640" mass="73945">MYEVKLKVELEDKVLEVTQGTTPYDILCDYFKDRKDVISCRIDGVYSDMSSEILKDCKLELMTFEDDGARDIFWHSSAHVLGNALVNLYPDAKLVHGPPIEEGFFYDVDVTDPISSEDYEKIEEEMVKIMKKNYRFERVIKSKEELLEAYRDNPCKTHFIMKGVDKESSVYRNGDFFDMCLGPHIRSTGVIKAVKVLKNSSAYFLNDPNLKSLQRIYAITFPSKGMMDEYLKRKEEAKERDHRKIGTELDLFFFSKYSPGSCFFLPNGTTMYNTLIEFLREEYRKRGFKEVITPNIFCTQLWEESGHLQNYKENMFIIEGDTFALKPMNCPGHCVMFRHQDHSFRDLPLRLADFGVLHRNELSGTLTGLTRVRRFQQDDAHIFCTKDQVKEEIKGCLEFLSFVYGVFGFRFELVLSTRPEKYLGSVDEWDRAEKALADAMDESNMPFKINAGDGAFYGPKIDITLHDALGRRIQCATIQLDFQLPQRFELKYRDSDGQCRTPVIIHRAILGSIERMIAIILESFGKRLPFWISPRQIAIVNMGNPDYVGKVRSVLARFRLDVIDDGNTLSKRIRTAETSGYALVCVVGKKEAEANEINIRFNKSNRNIGLYELRDILDRMADEKVELDSILPIDKVSISK</sequence>